<accession>Q7G7C7</accession>
<accession>A0A0P0XUF9</accession>
<reference key="1">
    <citation type="journal article" date="2003" name="Science">
        <title>In-depth view of structure, activity, and evolution of rice chromosome 10.</title>
        <authorList>
            <person name="Yu Y."/>
            <person name="Rambo T."/>
            <person name="Currie J."/>
            <person name="Saski C."/>
            <person name="Kim H.-R."/>
            <person name="Collura K."/>
            <person name="Thompson S."/>
            <person name="Simmons J."/>
            <person name="Yang T.-J."/>
            <person name="Nah G."/>
            <person name="Patel A.J."/>
            <person name="Thurmond S."/>
            <person name="Henry D."/>
            <person name="Oates R."/>
            <person name="Palmer M."/>
            <person name="Pries G."/>
            <person name="Gibson J."/>
            <person name="Anderson H."/>
            <person name="Paradkar M."/>
            <person name="Crane L."/>
            <person name="Dale J."/>
            <person name="Carver M.B."/>
            <person name="Wood T."/>
            <person name="Frisch D."/>
            <person name="Engler F."/>
            <person name="Soderlund C."/>
            <person name="Palmer L.E."/>
            <person name="Teytelman L."/>
            <person name="Nascimento L."/>
            <person name="De la Bastide M."/>
            <person name="Spiegel L."/>
            <person name="Ware D."/>
            <person name="O'Shaughnessy A."/>
            <person name="Dike S."/>
            <person name="Dedhia N."/>
            <person name="Preston R."/>
            <person name="Huang E."/>
            <person name="Ferraro K."/>
            <person name="Kuit K."/>
            <person name="Miller B."/>
            <person name="Zutavern T."/>
            <person name="Katzenberger F."/>
            <person name="Muller S."/>
            <person name="Balija V."/>
            <person name="Martienssen R.A."/>
            <person name="Stein L."/>
            <person name="Minx P."/>
            <person name="Johnson D."/>
            <person name="Cordum H."/>
            <person name="Mardis E."/>
            <person name="Cheng Z."/>
            <person name="Jiang J."/>
            <person name="Wilson R."/>
            <person name="McCombie W.R."/>
            <person name="Wing R.A."/>
            <person name="Yuan Q."/>
            <person name="Ouyang S."/>
            <person name="Liu J."/>
            <person name="Jones K.M."/>
            <person name="Gansberger K."/>
            <person name="Moffat K."/>
            <person name="Hill J."/>
            <person name="Tsitrin T."/>
            <person name="Overton L."/>
            <person name="Bera J."/>
            <person name="Kim M."/>
            <person name="Jin S."/>
            <person name="Tallon L."/>
            <person name="Ciecko A."/>
            <person name="Pai G."/>
            <person name="Van Aken S."/>
            <person name="Utterback T."/>
            <person name="Reidmuller S."/>
            <person name="Bormann J."/>
            <person name="Feldblyum T."/>
            <person name="Hsiao J."/>
            <person name="Zismann V."/>
            <person name="Blunt S."/>
            <person name="de Vazeille A.R."/>
            <person name="Shaffer T."/>
            <person name="Koo H."/>
            <person name="Suh B."/>
            <person name="Yang Q."/>
            <person name="Haas B."/>
            <person name="Peterson J."/>
            <person name="Pertea M."/>
            <person name="Volfovsky N."/>
            <person name="Wortman J."/>
            <person name="White O."/>
            <person name="Salzberg S.L."/>
            <person name="Fraser C.M."/>
            <person name="Buell C.R."/>
            <person name="Messing J."/>
            <person name="Song R."/>
            <person name="Fuks G."/>
            <person name="Llaca V."/>
            <person name="Kovchak S."/>
            <person name="Young S."/>
            <person name="Bowers J.E."/>
            <person name="Paterson A.H."/>
            <person name="Johns M.A."/>
            <person name="Mao L."/>
            <person name="Pan H."/>
            <person name="Dean R.A."/>
        </authorList>
    </citation>
    <scope>NUCLEOTIDE SEQUENCE [LARGE SCALE GENOMIC DNA]</scope>
    <source>
        <strain>cv. Nipponbare</strain>
    </source>
</reference>
<reference key="2">
    <citation type="journal article" date="2005" name="Nature">
        <title>The map-based sequence of the rice genome.</title>
        <authorList>
            <consortium name="International rice genome sequencing project (IRGSP)"/>
        </authorList>
    </citation>
    <scope>NUCLEOTIDE SEQUENCE [LARGE SCALE GENOMIC DNA]</scope>
    <source>
        <strain>cv. Nipponbare</strain>
    </source>
</reference>
<reference key="3">
    <citation type="journal article" date="2008" name="Nucleic Acids Res.">
        <title>The rice annotation project database (RAP-DB): 2008 update.</title>
        <authorList>
            <consortium name="The rice annotation project (RAP)"/>
        </authorList>
    </citation>
    <scope>GENOME REANNOTATION</scope>
    <source>
        <strain>cv. Nipponbare</strain>
    </source>
</reference>
<reference key="4">
    <citation type="journal article" date="2013" name="Rice">
        <title>Improvement of the Oryza sativa Nipponbare reference genome using next generation sequence and optical map data.</title>
        <authorList>
            <person name="Kawahara Y."/>
            <person name="de la Bastide M."/>
            <person name="Hamilton J.P."/>
            <person name="Kanamori H."/>
            <person name="McCombie W.R."/>
            <person name="Ouyang S."/>
            <person name="Schwartz D.C."/>
            <person name="Tanaka T."/>
            <person name="Wu J."/>
            <person name="Zhou S."/>
            <person name="Childs K.L."/>
            <person name="Davidson R.M."/>
            <person name="Lin H."/>
            <person name="Quesada-Ocampo L."/>
            <person name="Vaillancourt B."/>
            <person name="Sakai H."/>
            <person name="Lee S.S."/>
            <person name="Kim J."/>
            <person name="Numa H."/>
            <person name="Itoh T."/>
            <person name="Buell C.R."/>
            <person name="Matsumoto T."/>
        </authorList>
    </citation>
    <scope>GENOME REANNOTATION</scope>
    <source>
        <strain>cv. Nipponbare</strain>
    </source>
</reference>
<reference key="5">
    <citation type="journal article" date="2005" name="PLoS Biol.">
        <title>The genomes of Oryza sativa: a history of duplications.</title>
        <authorList>
            <person name="Yu J."/>
            <person name="Wang J."/>
            <person name="Lin W."/>
            <person name="Li S."/>
            <person name="Li H."/>
            <person name="Zhou J."/>
            <person name="Ni P."/>
            <person name="Dong W."/>
            <person name="Hu S."/>
            <person name="Zeng C."/>
            <person name="Zhang J."/>
            <person name="Zhang Y."/>
            <person name="Li R."/>
            <person name="Xu Z."/>
            <person name="Li S."/>
            <person name="Li X."/>
            <person name="Zheng H."/>
            <person name="Cong L."/>
            <person name="Lin L."/>
            <person name="Yin J."/>
            <person name="Geng J."/>
            <person name="Li G."/>
            <person name="Shi J."/>
            <person name="Liu J."/>
            <person name="Lv H."/>
            <person name="Li J."/>
            <person name="Wang J."/>
            <person name="Deng Y."/>
            <person name="Ran L."/>
            <person name="Shi X."/>
            <person name="Wang X."/>
            <person name="Wu Q."/>
            <person name="Li C."/>
            <person name="Ren X."/>
            <person name="Wang J."/>
            <person name="Wang X."/>
            <person name="Li D."/>
            <person name="Liu D."/>
            <person name="Zhang X."/>
            <person name="Ji Z."/>
            <person name="Zhao W."/>
            <person name="Sun Y."/>
            <person name="Zhang Z."/>
            <person name="Bao J."/>
            <person name="Han Y."/>
            <person name="Dong L."/>
            <person name="Ji J."/>
            <person name="Chen P."/>
            <person name="Wu S."/>
            <person name="Liu J."/>
            <person name="Xiao Y."/>
            <person name="Bu D."/>
            <person name="Tan J."/>
            <person name="Yang L."/>
            <person name="Ye C."/>
            <person name="Zhang J."/>
            <person name="Xu J."/>
            <person name="Zhou Y."/>
            <person name="Yu Y."/>
            <person name="Zhang B."/>
            <person name="Zhuang S."/>
            <person name="Wei H."/>
            <person name="Liu B."/>
            <person name="Lei M."/>
            <person name="Yu H."/>
            <person name="Li Y."/>
            <person name="Xu H."/>
            <person name="Wei S."/>
            <person name="He X."/>
            <person name="Fang L."/>
            <person name="Zhang Z."/>
            <person name="Zhang Y."/>
            <person name="Huang X."/>
            <person name="Su Z."/>
            <person name="Tong W."/>
            <person name="Li J."/>
            <person name="Tong Z."/>
            <person name="Li S."/>
            <person name="Ye J."/>
            <person name="Wang L."/>
            <person name="Fang L."/>
            <person name="Lei T."/>
            <person name="Chen C.-S."/>
            <person name="Chen H.-C."/>
            <person name="Xu Z."/>
            <person name="Li H."/>
            <person name="Huang H."/>
            <person name="Zhang F."/>
            <person name="Xu H."/>
            <person name="Li N."/>
            <person name="Zhao C."/>
            <person name="Li S."/>
            <person name="Dong L."/>
            <person name="Huang Y."/>
            <person name="Li L."/>
            <person name="Xi Y."/>
            <person name="Qi Q."/>
            <person name="Li W."/>
            <person name="Zhang B."/>
            <person name="Hu W."/>
            <person name="Zhang Y."/>
            <person name="Tian X."/>
            <person name="Jiao Y."/>
            <person name="Liang X."/>
            <person name="Jin J."/>
            <person name="Gao L."/>
            <person name="Zheng W."/>
            <person name="Hao B."/>
            <person name="Liu S.-M."/>
            <person name="Wang W."/>
            <person name="Yuan L."/>
            <person name="Cao M."/>
            <person name="McDermott J."/>
            <person name="Samudrala R."/>
            <person name="Wang J."/>
            <person name="Wong G.K.-S."/>
            <person name="Yang H."/>
        </authorList>
    </citation>
    <scope>NUCLEOTIDE SEQUENCE [LARGE SCALE GENOMIC DNA]</scope>
    <source>
        <strain>cv. Nipponbare</strain>
    </source>
</reference>
<reference key="6">
    <citation type="journal article" date="2003" name="Science">
        <title>Collection, mapping, and annotation of over 28,000 cDNA clones from japonica rice.</title>
        <authorList>
            <consortium name="The rice full-length cDNA consortium"/>
        </authorList>
    </citation>
    <scope>NUCLEOTIDE SEQUENCE [LARGE SCALE MRNA]</scope>
    <source>
        <strain>cv. Nipponbare</strain>
    </source>
</reference>
<reference key="7">
    <citation type="journal article" date="2009" name="Plant Cell Rep.">
        <title>Signal peptide peptidases are expressed in the shoot apex of rice, localized to the endoplasmic reticulum.</title>
        <authorList>
            <person name="Tamura T."/>
            <person name="Kuroda M."/>
            <person name="Oikawa T."/>
            <person name="Kyozuka J."/>
            <person name="Terauchi K."/>
            <person name="Ishimaru Y."/>
            <person name="Abe K."/>
            <person name="Asakura T."/>
        </authorList>
    </citation>
    <scope>GENE FAMILY</scope>
    <scope>NOMENCLATURE</scope>
</reference>
<proteinExistence type="evidence at transcript level"/>
<dbReference type="EC" id="3.4.23.-"/>
<dbReference type="EMBL" id="AC092388">
    <property type="protein sequence ID" value="AAM22738.1"/>
    <property type="molecule type" value="Genomic_DNA"/>
</dbReference>
<dbReference type="EMBL" id="DP000086">
    <property type="protein sequence ID" value="AAP53575.1"/>
    <property type="molecule type" value="Genomic_DNA"/>
</dbReference>
<dbReference type="EMBL" id="AP008216">
    <property type="protein sequence ID" value="BAF26432.1"/>
    <property type="molecule type" value="Genomic_DNA"/>
</dbReference>
<dbReference type="EMBL" id="AP014966">
    <property type="protein sequence ID" value="BAT10685.1"/>
    <property type="molecule type" value="Genomic_DNA"/>
</dbReference>
<dbReference type="EMBL" id="CM000147">
    <property type="protein sequence ID" value="EAZ15956.1"/>
    <property type="molecule type" value="Genomic_DNA"/>
</dbReference>
<dbReference type="EMBL" id="AK061008">
    <property type="protein sequence ID" value="BAG87672.1"/>
    <property type="molecule type" value="mRNA"/>
</dbReference>
<dbReference type="EMBL" id="AK072853">
    <property type="protein sequence ID" value="BAG93176.1"/>
    <property type="molecule type" value="mRNA"/>
</dbReference>
<dbReference type="RefSeq" id="XP_015614833.1">
    <property type="nucleotide sequence ID" value="XM_015759347.1"/>
</dbReference>
<dbReference type="FunCoup" id="Q7G7C7">
    <property type="interactions" value="2438"/>
</dbReference>
<dbReference type="STRING" id="39947.Q7G7C7"/>
<dbReference type="PaxDb" id="39947-Q7G7C7"/>
<dbReference type="EnsemblPlants" id="Os10t0393100-01">
    <property type="protein sequence ID" value="Os10t0393100-01"/>
    <property type="gene ID" value="Os10g0393100"/>
</dbReference>
<dbReference type="EnsemblPlants" id="Os10t0393100-02">
    <property type="protein sequence ID" value="Os10t0393100-02"/>
    <property type="gene ID" value="Os10g0393100"/>
</dbReference>
<dbReference type="Gramene" id="Os10t0393100-01">
    <property type="protein sequence ID" value="Os10t0393100-01"/>
    <property type="gene ID" value="Os10g0393100"/>
</dbReference>
<dbReference type="Gramene" id="Os10t0393100-02">
    <property type="protein sequence ID" value="Os10t0393100-02"/>
    <property type="gene ID" value="Os10g0393100"/>
</dbReference>
<dbReference type="KEGG" id="dosa:Os10g0393100"/>
<dbReference type="eggNOG" id="KOG2443">
    <property type="taxonomic scope" value="Eukaryota"/>
</dbReference>
<dbReference type="HOGENOM" id="CLU_061449_0_0_1"/>
<dbReference type="InParanoid" id="Q7G7C7"/>
<dbReference type="OMA" id="VDYQWAY"/>
<dbReference type="OrthoDB" id="29661at2759"/>
<dbReference type="Proteomes" id="UP000000763">
    <property type="component" value="Chromosome 10"/>
</dbReference>
<dbReference type="Proteomes" id="UP000007752">
    <property type="component" value="Chromosome 10"/>
</dbReference>
<dbReference type="Proteomes" id="UP000059680">
    <property type="component" value="Chromosome 10"/>
</dbReference>
<dbReference type="GO" id="GO:0098554">
    <property type="term" value="C:cytoplasmic side of endoplasmic reticulum membrane"/>
    <property type="evidence" value="ECO:0000318"/>
    <property type="project" value="GO_Central"/>
</dbReference>
<dbReference type="GO" id="GO:0010008">
    <property type="term" value="C:endosome membrane"/>
    <property type="evidence" value="ECO:0007669"/>
    <property type="project" value="UniProtKB-SubCell"/>
</dbReference>
<dbReference type="GO" id="GO:0030660">
    <property type="term" value="C:Golgi-associated vesicle membrane"/>
    <property type="evidence" value="ECO:0000318"/>
    <property type="project" value="GO_Central"/>
</dbReference>
<dbReference type="GO" id="GO:0098553">
    <property type="term" value="C:lumenal side of endoplasmic reticulum membrane"/>
    <property type="evidence" value="ECO:0000318"/>
    <property type="project" value="GO_Central"/>
</dbReference>
<dbReference type="GO" id="GO:0042500">
    <property type="term" value="F:aspartic endopeptidase activity, intramembrane cleaving"/>
    <property type="evidence" value="ECO:0000318"/>
    <property type="project" value="GO_Central"/>
</dbReference>
<dbReference type="GO" id="GO:0033619">
    <property type="term" value="P:membrane protein proteolysis"/>
    <property type="evidence" value="ECO:0000318"/>
    <property type="project" value="GO_Central"/>
</dbReference>
<dbReference type="GO" id="GO:0006465">
    <property type="term" value="P:signal peptide processing"/>
    <property type="evidence" value="ECO:0000318"/>
    <property type="project" value="GO_Central"/>
</dbReference>
<dbReference type="InterPro" id="IPR007369">
    <property type="entry name" value="Peptidase_A22B_SPP"/>
</dbReference>
<dbReference type="InterPro" id="IPR006639">
    <property type="entry name" value="Preselin/SPP"/>
</dbReference>
<dbReference type="PANTHER" id="PTHR12174">
    <property type="entry name" value="SIGNAL PEPTIDE PEPTIDASE"/>
    <property type="match status" value="1"/>
</dbReference>
<dbReference type="PANTHER" id="PTHR12174:SF22">
    <property type="entry name" value="SIGNAL PEPTIDE PEPTIDASE-LIKE 3"/>
    <property type="match status" value="1"/>
</dbReference>
<dbReference type="Pfam" id="PF04258">
    <property type="entry name" value="Peptidase_A22B"/>
    <property type="match status" value="1"/>
</dbReference>
<dbReference type="SMART" id="SM00730">
    <property type="entry name" value="PSN"/>
    <property type="match status" value="1"/>
</dbReference>
<keyword id="KW-0967">Endosome</keyword>
<keyword id="KW-0378">Hydrolase</keyword>
<keyword id="KW-0472">Membrane</keyword>
<keyword id="KW-0645">Protease</keyword>
<keyword id="KW-1185">Reference proteome</keyword>
<keyword id="KW-0812">Transmembrane</keyword>
<keyword id="KW-1133">Transmembrane helix</keyword>
<organism>
    <name type="scientific">Oryza sativa subsp. japonica</name>
    <name type="common">Rice</name>
    <dbReference type="NCBI Taxonomy" id="39947"/>
    <lineage>
        <taxon>Eukaryota</taxon>
        <taxon>Viridiplantae</taxon>
        <taxon>Streptophyta</taxon>
        <taxon>Embryophyta</taxon>
        <taxon>Tracheophyta</taxon>
        <taxon>Spermatophyta</taxon>
        <taxon>Magnoliopsida</taxon>
        <taxon>Liliopsida</taxon>
        <taxon>Poales</taxon>
        <taxon>Poaceae</taxon>
        <taxon>BOP clade</taxon>
        <taxon>Oryzoideae</taxon>
        <taxon>Oryzeae</taxon>
        <taxon>Oryzinae</taxon>
        <taxon>Oryza</taxon>
        <taxon>Oryza sativa</taxon>
    </lineage>
</organism>
<evidence type="ECO:0000250" key="1"/>
<evidence type="ECO:0000255" key="2"/>
<evidence type="ECO:0000305" key="3"/>
<feature type="chain" id="PRO_0000419100" description="Signal peptide peptidase-like 1">
    <location>
        <begin position="1"/>
        <end position="371"/>
    </location>
</feature>
<feature type="topological domain" description="Lumenal" evidence="2">
    <location>
        <begin position="1"/>
        <end position="6"/>
    </location>
</feature>
<feature type="transmembrane region" description="Helical" evidence="2">
    <location>
        <begin position="7"/>
        <end position="27"/>
    </location>
</feature>
<feature type="topological domain" description="Cytoplasmic" evidence="2">
    <location>
        <begin position="28"/>
        <end position="57"/>
    </location>
</feature>
<feature type="transmembrane region" description="Helical" evidence="2">
    <location>
        <begin position="58"/>
        <end position="75"/>
    </location>
</feature>
<feature type="topological domain" description="Lumenal" evidence="2">
    <location>
        <begin position="76"/>
        <end position="80"/>
    </location>
</feature>
<feature type="transmembrane region" description="Helical" evidence="2">
    <location>
        <begin position="81"/>
        <end position="103"/>
    </location>
</feature>
<feature type="topological domain" description="Cytoplasmic" evidence="2">
    <location>
        <begin position="104"/>
        <end position="123"/>
    </location>
</feature>
<feature type="transmembrane region" description="Helical" evidence="2">
    <location>
        <begin position="124"/>
        <end position="146"/>
    </location>
</feature>
<feature type="topological domain" description="Lumenal" evidence="2">
    <location>
        <begin position="147"/>
        <end position="149"/>
    </location>
</feature>
<feature type="transmembrane region" description="Helical" evidence="2">
    <location>
        <begin position="150"/>
        <end position="167"/>
    </location>
</feature>
<feature type="topological domain" description="Cytoplasmic" evidence="2">
    <location>
        <begin position="168"/>
        <end position="171"/>
    </location>
</feature>
<feature type="transmembrane region" description="Helical" evidence="2">
    <location>
        <begin position="172"/>
        <end position="192"/>
    </location>
</feature>
<feature type="topological domain" description="Lumenal" evidence="2">
    <location>
        <begin position="193"/>
        <end position="258"/>
    </location>
</feature>
<feature type="transmembrane region" description="Helical" evidence="2">
    <location>
        <begin position="259"/>
        <end position="279"/>
    </location>
</feature>
<feature type="topological domain" description="Cytoplasmic" evidence="2">
    <location>
        <begin position="280"/>
        <end position="301"/>
    </location>
</feature>
<feature type="transmembrane region" description="Helical" evidence="2">
    <location>
        <begin position="302"/>
        <end position="322"/>
    </location>
</feature>
<feature type="topological domain" description="Lumenal" evidence="2">
    <location>
        <begin position="323"/>
        <end position="326"/>
    </location>
</feature>
<feature type="transmembrane region" description="Helical" evidence="2">
    <location>
        <begin position="327"/>
        <end position="347"/>
    </location>
</feature>
<feature type="topological domain" description="Cytoplasmic" evidence="2">
    <location>
        <begin position="348"/>
        <end position="371"/>
    </location>
</feature>
<feature type="short sequence motif" description="PAL">
    <location>
        <begin position="328"/>
        <end position="330"/>
    </location>
</feature>
<feature type="active site" evidence="1">
    <location>
        <position position="186"/>
    </location>
</feature>
<feature type="active site" evidence="1">
    <location>
        <position position="265"/>
    </location>
</feature>
<name>SIPL1_ORYSJ</name>
<comment type="function">
    <text evidence="1">Intramembrane-cleaving aspartic protease (I-CLiP) that cleaves type II membrane signal peptides in the hydrophobic plane of the membrane.</text>
</comment>
<comment type="subcellular location">
    <subcellularLocation>
        <location evidence="1">Endosome membrane</location>
        <topology evidence="1">Multi-pass membrane protein</topology>
    </subcellularLocation>
</comment>
<comment type="domain">
    <text evidence="1">The first transmembrane domain may act as a type I signal anchor. The PAL motif is required for normal active site conformation.</text>
</comment>
<comment type="similarity">
    <text evidence="3">Belongs to the peptidase A22B family.</text>
</comment>
<protein>
    <recommendedName>
        <fullName>Signal peptide peptidase-like 1</fullName>
        <shortName>OsSPPL1</shortName>
        <ecNumber>3.4.23.-</ecNumber>
    </recommendedName>
</protein>
<sequence>MESLWKLSYLLEPASLALILTAVSVAYASASRALDHGREMERNLDFSEASITLDRSQALMIPLASSCSLLLMFYLFSSVSHLVTAFTAVASAMALFFCLSPYVNCVRSRLGVGDPFVSRCCSKPFTRLQGLLVAICVGTVVAWLVSGHWLLNNLLGISICIAFVSHVRLPNIKICALLLVCLFVYDVFWVFFSERFFGANVMVSVATQKASNPVHTVANKLSLPGLQLITKKLELPVKLVFPRSLMGGLAPGSSPGDYMMLGLGDMAIPGMLLALVLSFDHRKIKDMSVSQDMPPSKQRKYVWYALTGYGVGLVTALAAGILSQSPQPALLYLVPSTLGPVMYMSWLRNELWELWEGSRPIINDKAHLLEV</sequence>
<gene>
    <name type="primary">SPPL1</name>
    <name type="ordered locus">Os10g0393100</name>
    <name type="ordered locus">LOC_Os10g25360</name>
    <name type="ORF">OsJ_31401</name>
    <name type="ORF">OSJNBa0011L09.25</name>
</gene>